<name>RL24_BURA4</name>
<organism>
    <name type="scientific">Burkholderia ambifaria (strain MC40-6)</name>
    <dbReference type="NCBI Taxonomy" id="398577"/>
    <lineage>
        <taxon>Bacteria</taxon>
        <taxon>Pseudomonadati</taxon>
        <taxon>Pseudomonadota</taxon>
        <taxon>Betaproteobacteria</taxon>
        <taxon>Burkholderiales</taxon>
        <taxon>Burkholderiaceae</taxon>
        <taxon>Burkholderia</taxon>
        <taxon>Burkholderia cepacia complex</taxon>
    </lineage>
</organism>
<comment type="function">
    <text evidence="1">One of two assembly initiator proteins, it binds directly to the 5'-end of the 23S rRNA, where it nucleates assembly of the 50S subunit.</text>
</comment>
<comment type="function">
    <text evidence="1">One of the proteins that surrounds the polypeptide exit tunnel on the outside of the subunit.</text>
</comment>
<comment type="subunit">
    <text evidence="1">Part of the 50S ribosomal subunit.</text>
</comment>
<comment type="similarity">
    <text evidence="1">Belongs to the universal ribosomal protein uL24 family.</text>
</comment>
<gene>
    <name evidence="1" type="primary">rplX</name>
    <name type="ordered locus">BamMC406_0287</name>
</gene>
<reference key="1">
    <citation type="submission" date="2008-04" db="EMBL/GenBank/DDBJ databases">
        <title>Complete sequence of chromosome 1 of Burkholderia ambifaria MC40-6.</title>
        <authorList>
            <person name="Copeland A."/>
            <person name="Lucas S."/>
            <person name="Lapidus A."/>
            <person name="Glavina del Rio T."/>
            <person name="Dalin E."/>
            <person name="Tice H."/>
            <person name="Pitluck S."/>
            <person name="Chain P."/>
            <person name="Malfatti S."/>
            <person name="Shin M."/>
            <person name="Vergez L."/>
            <person name="Lang D."/>
            <person name="Schmutz J."/>
            <person name="Larimer F."/>
            <person name="Land M."/>
            <person name="Hauser L."/>
            <person name="Kyrpides N."/>
            <person name="Lykidis A."/>
            <person name="Ramette A."/>
            <person name="Konstantinidis K."/>
            <person name="Tiedje J."/>
            <person name="Richardson P."/>
        </authorList>
    </citation>
    <scope>NUCLEOTIDE SEQUENCE [LARGE SCALE GENOMIC DNA]</scope>
    <source>
        <strain>MC40-6</strain>
    </source>
</reference>
<evidence type="ECO:0000255" key="1">
    <source>
        <dbReference type="HAMAP-Rule" id="MF_01326"/>
    </source>
</evidence>
<evidence type="ECO:0000305" key="2"/>
<accession>B1YRP0</accession>
<proteinExistence type="inferred from homology"/>
<keyword id="KW-0687">Ribonucleoprotein</keyword>
<keyword id="KW-0689">Ribosomal protein</keyword>
<keyword id="KW-0694">RNA-binding</keyword>
<keyword id="KW-0699">rRNA-binding</keyword>
<feature type="chain" id="PRO_1000141974" description="Large ribosomal subunit protein uL24">
    <location>
        <begin position="1"/>
        <end position="102"/>
    </location>
</feature>
<protein>
    <recommendedName>
        <fullName evidence="1">Large ribosomal subunit protein uL24</fullName>
    </recommendedName>
    <alternativeName>
        <fullName evidence="2">50S ribosomal protein L24</fullName>
    </alternativeName>
</protein>
<dbReference type="EMBL" id="CP001025">
    <property type="protein sequence ID" value="ACB62788.1"/>
    <property type="molecule type" value="Genomic_DNA"/>
</dbReference>
<dbReference type="RefSeq" id="WP_006477187.1">
    <property type="nucleotide sequence ID" value="NC_010551.1"/>
</dbReference>
<dbReference type="SMR" id="B1YRP0"/>
<dbReference type="GeneID" id="98107149"/>
<dbReference type="KEGG" id="bac:BamMC406_0287"/>
<dbReference type="HOGENOM" id="CLU_093315_2_2_4"/>
<dbReference type="OrthoDB" id="9807419at2"/>
<dbReference type="Proteomes" id="UP000001680">
    <property type="component" value="Chromosome 1"/>
</dbReference>
<dbReference type="GO" id="GO:1990904">
    <property type="term" value="C:ribonucleoprotein complex"/>
    <property type="evidence" value="ECO:0007669"/>
    <property type="project" value="UniProtKB-KW"/>
</dbReference>
<dbReference type="GO" id="GO:0005840">
    <property type="term" value="C:ribosome"/>
    <property type="evidence" value="ECO:0007669"/>
    <property type="project" value="UniProtKB-KW"/>
</dbReference>
<dbReference type="GO" id="GO:0019843">
    <property type="term" value="F:rRNA binding"/>
    <property type="evidence" value="ECO:0007669"/>
    <property type="project" value="UniProtKB-UniRule"/>
</dbReference>
<dbReference type="GO" id="GO:0003735">
    <property type="term" value="F:structural constituent of ribosome"/>
    <property type="evidence" value="ECO:0007669"/>
    <property type="project" value="InterPro"/>
</dbReference>
<dbReference type="GO" id="GO:0006412">
    <property type="term" value="P:translation"/>
    <property type="evidence" value="ECO:0007669"/>
    <property type="project" value="UniProtKB-UniRule"/>
</dbReference>
<dbReference type="CDD" id="cd06089">
    <property type="entry name" value="KOW_RPL26"/>
    <property type="match status" value="1"/>
</dbReference>
<dbReference type="Gene3D" id="2.30.30.30">
    <property type="match status" value="1"/>
</dbReference>
<dbReference type="HAMAP" id="MF_01326_B">
    <property type="entry name" value="Ribosomal_uL24_B"/>
    <property type="match status" value="1"/>
</dbReference>
<dbReference type="InterPro" id="IPR014722">
    <property type="entry name" value="Rib_uL2_dom2"/>
</dbReference>
<dbReference type="InterPro" id="IPR003256">
    <property type="entry name" value="Ribosomal_uL24"/>
</dbReference>
<dbReference type="InterPro" id="IPR005825">
    <property type="entry name" value="Ribosomal_uL24_CS"/>
</dbReference>
<dbReference type="InterPro" id="IPR041988">
    <property type="entry name" value="Ribosomal_uL24_KOW"/>
</dbReference>
<dbReference type="InterPro" id="IPR008991">
    <property type="entry name" value="Translation_prot_SH3-like_sf"/>
</dbReference>
<dbReference type="NCBIfam" id="TIGR01079">
    <property type="entry name" value="rplX_bact"/>
    <property type="match status" value="1"/>
</dbReference>
<dbReference type="PANTHER" id="PTHR12903">
    <property type="entry name" value="MITOCHONDRIAL RIBOSOMAL PROTEIN L24"/>
    <property type="match status" value="1"/>
</dbReference>
<dbReference type="Pfam" id="PF17136">
    <property type="entry name" value="ribosomal_L24"/>
    <property type="match status" value="1"/>
</dbReference>
<dbReference type="SUPFAM" id="SSF50104">
    <property type="entry name" value="Translation proteins SH3-like domain"/>
    <property type="match status" value="1"/>
</dbReference>
<dbReference type="PROSITE" id="PS01108">
    <property type="entry name" value="RIBOSOMAL_L24"/>
    <property type="match status" value="1"/>
</dbReference>
<sequence>MNKIRKGDEVIVVTGKDKGKRGVVLAVGAEHVTVEGINLVKKHVKPNPMKGTTGGVEAKTMPLHISNVALVDANGKASRVGIKVEEGKKVRFLKTTGAVLSA</sequence>